<comment type="function">
    <text evidence="4">Photosensitive kinase that is involved in increased bacterial virulence upon exposure to light.</text>
</comment>
<comment type="catalytic activity">
    <reaction>
        <text>ATP + protein L-histidine = ADP + protein N-phospho-L-histidine.</text>
        <dbReference type="EC" id="2.7.13.3"/>
    </reaction>
</comment>
<comment type="PTM">
    <text>FMN binds covalently to cysteine after exposure to blue light and this bond is spontaneously broken in the dark.</text>
</comment>
<evidence type="ECO:0000250" key="1"/>
<evidence type="ECO:0000255" key="2">
    <source>
        <dbReference type="PROSITE-ProRule" id="PRU00140"/>
    </source>
</evidence>
<evidence type="ECO:0000255" key="3">
    <source>
        <dbReference type="PROSITE-ProRule" id="PRU00141"/>
    </source>
</evidence>
<evidence type="ECO:0000269" key="4">
    <source>
    </source>
</evidence>
<dbReference type="EC" id="2.7.13.3"/>
<dbReference type="EMBL" id="CP000157">
    <property type="protein sequence ID" value="ABC62688.1"/>
    <property type="molecule type" value="Genomic_DNA"/>
</dbReference>
<dbReference type="SMR" id="Q2NCA3"/>
<dbReference type="STRING" id="314225.ELI_02980"/>
<dbReference type="KEGG" id="eli:ELI_02980"/>
<dbReference type="eggNOG" id="COG3920">
    <property type="taxonomic scope" value="Bacteria"/>
</dbReference>
<dbReference type="HOGENOM" id="CLU_000445_114_57_5"/>
<dbReference type="Proteomes" id="UP000008808">
    <property type="component" value="Chromosome"/>
</dbReference>
<dbReference type="GO" id="GO:0005524">
    <property type="term" value="F:ATP binding"/>
    <property type="evidence" value="ECO:0007669"/>
    <property type="project" value="UniProtKB-KW"/>
</dbReference>
<dbReference type="GO" id="GO:0009881">
    <property type="term" value="F:photoreceptor activity"/>
    <property type="evidence" value="ECO:0007669"/>
    <property type="project" value="UniProtKB-KW"/>
</dbReference>
<dbReference type="GO" id="GO:0004673">
    <property type="term" value="F:protein histidine kinase activity"/>
    <property type="evidence" value="ECO:0007669"/>
    <property type="project" value="UniProtKB-EC"/>
</dbReference>
<dbReference type="CDD" id="cd00130">
    <property type="entry name" value="PAS"/>
    <property type="match status" value="1"/>
</dbReference>
<dbReference type="Gene3D" id="3.30.565.10">
    <property type="entry name" value="Histidine kinase-like ATPase, C-terminal domain"/>
    <property type="match status" value="1"/>
</dbReference>
<dbReference type="Gene3D" id="3.30.450.20">
    <property type="entry name" value="PAS domain"/>
    <property type="match status" value="1"/>
</dbReference>
<dbReference type="InterPro" id="IPR036890">
    <property type="entry name" value="HATPase_C_sf"/>
</dbReference>
<dbReference type="InterPro" id="IPR001610">
    <property type="entry name" value="PAC"/>
</dbReference>
<dbReference type="InterPro" id="IPR000014">
    <property type="entry name" value="PAS"/>
</dbReference>
<dbReference type="InterPro" id="IPR000700">
    <property type="entry name" value="PAS-assoc_C"/>
</dbReference>
<dbReference type="InterPro" id="IPR035965">
    <property type="entry name" value="PAS-like_dom_sf"/>
</dbReference>
<dbReference type="InterPro" id="IPR011102">
    <property type="entry name" value="Sig_transdc_His_kinase_HWE"/>
</dbReference>
<dbReference type="NCBIfam" id="NF010077">
    <property type="entry name" value="PRK13559.1"/>
    <property type="match status" value="1"/>
</dbReference>
<dbReference type="NCBIfam" id="TIGR00229">
    <property type="entry name" value="sensory_box"/>
    <property type="match status" value="1"/>
</dbReference>
<dbReference type="PANTHER" id="PTHR47429">
    <property type="entry name" value="PROTEIN TWIN LOV 1"/>
    <property type="match status" value="1"/>
</dbReference>
<dbReference type="PANTHER" id="PTHR47429:SF2">
    <property type="entry name" value="PROTEIN TWIN LOV 1"/>
    <property type="match status" value="1"/>
</dbReference>
<dbReference type="Pfam" id="PF13581">
    <property type="entry name" value="HATPase_c_2"/>
    <property type="match status" value="1"/>
</dbReference>
<dbReference type="Pfam" id="PF07536">
    <property type="entry name" value="HWE_HK"/>
    <property type="match status" value="1"/>
</dbReference>
<dbReference type="Pfam" id="PF13426">
    <property type="entry name" value="PAS_9"/>
    <property type="match status" value="1"/>
</dbReference>
<dbReference type="SMART" id="SM00911">
    <property type="entry name" value="HWE_HK"/>
    <property type="match status" value="1"/>
</dbReference>
<dbReference type="SMART" id="SM00086">
    <property type="entry name" value="PAC"/>
    <property type="match status" value="1"/>
</dbReference>
<dbReference type="SUPFAM" id="SSF55874">
    <property type="entry name" value="ATPase domain of HSP90 chaperone/DNA topoisomerase II/histidine kinase"/>
    <property type="match status" value="1"/>
</dbReference>
<dbReference type="SUPFAM" id="SSF55785">
    <property type="entry name" value="PYP-like sensor domain (PAS domain)"/>
    <property type="match status" value="1"/>
</dbReference>
<dbReference type="PROSITE" id="PS50113">
    <property type="entry name" value="PAC"/>
    <property type="match status" value="1"/>
</dbReference>
<dbReference type="PROSITE" id="PS50112">
    <property type="entry name" value="PAS"/>
    <property type="match status" value="1"/>
</dbReference>
<gene>
    <name type="ordered locus">ELI_02980</name>
</gene>
<accession>Q2NCA3</accession>
<keyword id="KW-0067">ATP-binding</keyword>
<keyword id="KW-0157">Chromophore</keyword>
<keyword id="KW-0285">Flavoprotein</keyword>
<keyword id="KW-0288">FMN</keyword>
<keyword id="KW-0418">Kinase</keyword>
<keyword id="KW-0547">Nucleotide-binding</keyword>
<keyword id="KW-0597">Phosphoprotein</keyword>
<keyword id="KW-0600">Photoreceptor protein</keyword>
<keyword id="KW-0675">Receptor</keyword>
<keyword id="KW-1185">Reference proteome</keyword>
<keyword id="KW-0716">Sensory transduction</keyword>
<keyword id="KW-0808">Transferase</keyword>
<keyword id="KW-0843">Virulence</keyword>
<organism>
    <name type="scientific">Erythrobacter litoralis (strain HTCC2594)</name>
    <dbReference type="NCBI Taxonomy" id="314225"/>
    <lineage>
        <taxon>Bacteria</taxon>
        <taxon>Pseudomonadati</taxon>
        <taxon>Pseudomonadota</taxon>
        <taxon>Alphaproteobacteria</taxon>
        <taxon>Sphingomonadales</taxon>
        <taxon>Erythrobacteraceae</taxon>
        <taxon>Erythrobacter/Porphyrobacter group</taxon>
        <taxon>Erythrobacter</taxon>
    </lineage>
</organism>
<proteinExistence type="evidence at protein level"/>
<sequence>MPLKGEISAQAGREFDTSRLDLRAIIDPRDLRVDPTRLFLETTQQTRLAICISDPHQPDCPVVYVNQAFLDLTGYAREEIVGRNCRFLQGADTDPEQVRKLREGIAAERYTVVDLLNYRKDGIPFWNAVHVGPIYGEDGTLQYFYGSQWDITDIVAERRKAETQRRIAAELRHRTGNIFAVLNAIIGLTSRRERDVSEFADKLSERVSALASAHRMTIMDEPDQEAVAIDDLVTGVMKPYRNRFAERVTTSGPKIELGPRSVTALGLALHELATNAVKYGALSVDAGRVEISWSREDGDVTLVWQEQGGPTVSQEQSEPVKGNGTMLIDGMIASLTGSIERDFAAAGLQAKITLPVHQPE</sequence>
<reference key="1">
    <citation type="journal article" date="2009" name="J. Bacteriol.">
        <title>Complete genome sequence of Erythrobacter litoralis HTCC2594.</title>
        <authorList>
            <person name="Oh H.M."/>
            <person name="Giovannoni S.J."/>
            <person name="Ferriera S."/>
            <person name="Johnson J."/>
            <person name="Cho J.C."/>
        </authorList>
    </citation>
    <scope>NUCLEOTIDE SEQUENCE [LARGE SCALE GENOMIC DNA]</scope>
    <source>
        <strain>HTCC2594</strain>
    </source>
</reference>
<reference key="2">
    <citation type="journal article" date="2007" name="Science">
        <title>Blue-light-activated histidine kinases: two-component sensors in bacteria.</title>
        <authorList>
            <person name="Swartz T.E."/>
            <person name="Tseng T.-S."/>
            <person name="Frederickson M.A."/>
            <person name="Paris G."/>
            <person name="Comerci D.J."/>
            <person name="Rajashekara G."/>
            <person name="Kim J.-G."/>
            <person name="Mudgett M.B."/>
            <person name="Splitter G.A."/>
            <person name="Ugalde R.A."/>
            <person name="Goldbaum F.A."/>
            <person name="Briggs W.R."/>
            <person name="Bogomolni R.A."/>
        </authorList>
    </citation>
    <scope>FUNCTION IN LIGHT SENSING</scope>
    <scope>FLAVIN CHROMOPHORE</scope>
    <scope>KINASE ACTIVITY</scope>
    <scope>ROLE IN VIRULENCE</scope>
</reference>
<name>LVHK1_ERYLH</name>
<feature type="chain" id="PRO_0000361289" description="Blue-light-activated histidine kinase 1">
    <location>
        <begin position="1"/>
        <end position="360"/>
    </location>
</feature>
<feature type="domain" description="PAS" evidence="2">
    <location>
        <begin position="38"/>
        <end position="109"/>
    </location>
</feature>
<feature type="domain" description="PAC" evidence="3">
    <location>
        <begin position="109"/>
        <end position="163"/>
    </location>
</feature>
<feature type="region of interest" description="HWE histidine kinase domain">
    <location>
        <begin position="260"/>
        <end position="303"/>
    </location>
</feature>
<feature type="modified residue" description="S-4a-FMN cysteine">
    <location>
        <position position="85"/>
    </location>
</feature>
<feature type="modified residue" description="Phosphohistidine; by autocatalysis" evidence="1">
    <location>
        <position position="173"/>
    </location>
</feature>
<protein>
    <recommendedName>
        <fullName>Blue-light-activated histidine kinase 1</fullName>
        <ecNumber>2.7.13.3</ecNumber>
    </recommendedName>
    <alternativeName>
        <fullName>EL360-LOV-histidine kinase</fullName>
        <shortName>EL360-LOV-HK</shortName>
    </alternativeName>
</protein>